<proteinExistence type="inferred from homology"/>
<sequence>MPKQKTHRASAKRFKRTGSGGLKRFRAFTSHRFHGKTKKQRRHLRKAGLVSSGDFKRIKAMVTGL</sequence>
<name>RL35_STRP3</name>
<comment type="similarity">
    <text evidence="1">Belongs to the bacterial ribosomal protein bL35 family.</text>
</comment>
<protein>
    <recommendedName>
        <fullName evidence="1">Large ribosomal subunit protein bL35</fullName>
    </recommendedName>
    <alternativeName>
        <fullName evidence="3">50S ribosomal protein L35</fullName>
    </alternativeName>
</protein>
<dbReference type="EMBL" id="AE014074">
    <property type="protein sequence ID" value="AAM79146.1"/>
    <property type="molecule type" value="Genomic_DNA"/>
</dbReference>
<dbReference type="RefSeq" id="WP_002985151.1">
    <property type="nucleotide sequence ID" value="NC_004070.1"/>
</dbReference>
<dbReference type="SMR" id="P0DE48"/>
<dbReference type="GeneID" id="83690415"/>
<dbReference type="KEGG" id="spg:SpyM3_0539"/>
<dbReference type="HOGENOM" id="CLU_169643_3_1_9"/>
<dbReference type="Proteomes" id="UP000000564">
    <property type="component" value="Chromosome"/>
</dbReference>
<dbReference type="GO" id="GO:0022625">
    <property type="term" value="C:cytosolic large ribosomal subunit"/>
    <property type="evidence" value="ECO:0007669"/>
    <property type="project" value="TreeGrafter"/>
</dbReference>
<dbReference type="GO" id="GO:0003735">
    <property type="term" value="F:structural constituent of ribosome"/>
    <property type="evidence" value="ECO:0007669"/>
    <property type="project" value="InterPro"/>
</dbReference>
<dbReference type="GO" id="GO:0006412">
    <property type="term" value="P:translation"/>
    <property type="evidence" value="ECO:0007669"/>
    <property type="project" value="UniProtKB-UniRule"/>
</dbReference>
<dbReference type="FunFam" id="4.10.410.60:FF:000001">
    <property type="entry name" value="50S ribosomal protein L35"/>
    <property type="match status" value="1"/>
</dbReference>
<dbReference type="Gene3D" id="4.10.410.60">
    <property type="match status" value="1"/>
</dbReference>
<dbReference type="HAMAP" id="MF_00514">
    <property type="entry name" value="Ribosomal_bL35"/>
    <property type="match status" value="1"/>
</dbReference>
<dbReference type="InterPro" id="IPR001706">
    <property type="entry name" value="Ribosomal_bL35"/>
</dbReference>
<dbReference type="InterPro" id="IPR021137">
    <property type="entry name" value="Ribosomal_bL35-like"/>
</dbReference>
<dbReference type="InterPro" id="IPR018265">
    <property type="entry name" value="Ribosomal_bL35_CS"/>
</dbReference>
<dbReference type="InterPro" id="IPR037229">
    <property type="entry name" value="Ribosomal_bL35_sf"/>
</dbReference>
<dbReference type="NCBIfam" id="TIGR00001">
    <property type="entry name" value="rpmI_bact"/>
    <property type="match status" value="1"/>
</dbReference>
<dbReference type="PANTHER" id="PTHR33343">
    <property type="entry name" value="54S RIBOSOMAL PROTEIN BL35M"/>
    <property type="match status" value="1"/>
</dbReference>
<dbReference type="PANTHER" id="PTHR33343:SF1">
    <property type="entry name" value="LARGE RIBOSOMAL SUBUNIT PROTEIN BL35M"/>
    <property type="match status" value="1"/>
</dbReference>
<dbReference type="Pfam" id="PF01632">
    <property type="entry name" value="Ribosomal_L35p"/>
    <property type="match status" value="1"/>
</dbReference>
<dbReference type="PRINTS" id="PR00064">
    <property type="entry name" value="RIBOSOMALL35"/>
</dbReference>
<dbReference type="SUPFAM" id="SSF143034">
    <property type="entry name" value="L35p-like"/>
    <property type="match status" value="1"/>
</dbReference>
<dbReference type="PROSITE" id="PS00936">
    <property type="entry name" value="RIBOSOMAL_L35"/>
    <property type="match status" value="1"/>
</dbReference>
<gene>
    <name evidence="1" type="primary">rpmI</name>
    <name type="ordered locus">SpyM3_0539</name>
</gene>
<reference key="1">
    <citation type="journal article" date="2002" name="Proc. Natl. Acad. Sci. U.S.A.">
        <title>Genome sequence of a serotype M3 strain of group A Streptococcus: phage-encoded toxins, the high-virulence phenotype, and clone emergence.</title>
        <authorList>
            <person name="Beres S.B."/>
            <person name="Sylva G.L."/>
            <person name="Barbian K.D."/>
            <person name="Lei B."/>
            <person name="Hoff J.S."/>
            <person name="Mammarella N.D."/>
            <person name="Liu M.-Y."/>
            <person name="Smoot J.C."/>
            <person name="Porcella S.F."/>
            <person name="Parkins L.D."/>
            <person name="Campbell D.S."/>
            <person name="Smith T.M."/>
            <person name="McCormick J.K."/>
            <person name="Leung D.Y.M."/>
            <person name="Schlievert P.M."/>
            <person name="Musser J.M."/>
        </authorList>
    </citation>
    <scope>NUCLEOTIDE SEQUENCE [LARGE SCALE GENOMIC DNA]</scope>
    <source>
        <strain>ATCC BAA-595 / MGAS315</strain>
    </source>
</reference>
<organism>
    <name type="scientific">Streptococcus pyogenes serotype M3 (strain ATCC BAA-595 / MGAS315)</name>
    <dbReference type="NCBI Taxonomy" id="198466"/>
    <lineage>
        <taxon>Bacteria</taxon>
        <taxon>Bacillati</taxon>
        <taxon>Bacillota</taxon>
        <taxon>Bacilli</taxon>
        <taxon>Lactobacillales</taxon>
        <taxon>Streptococcaceae</taxon>
        <taxon>Streptococcus</taxon>
    </lineage>
</organism>
<evidence type="ECO:0000255" key="1">
    <source>
        <dbReference type="HAMAP-Rule" id="MF_00514"/>
    </source>
</evidence>
<evidence type="ECO:0000256" key="2">
    <source>
        <dbReference type="SAM" id="MobiDB-lite"/>
    </source>
</evidence>
<evidence type="ECO:0000305" key="3"/>
<feature type="chain" id="PRO_0000177435" description="Large ribosomal subunit protein bL35">
    <location>
        <begin position="1"/>
        <end position="65"/>
    </location>
</feature>
<feature type="region of interest" description="Disordered" evidence="2">
    <location>
        <begin position="1"/>
        <end position="20"/>
    </location>
</feature>
<feature type="compositionally biased region" description="Basic residues" evidence="2">
    <location>
        <begin position="1"/>
        <end position="16"/>
    </location>
</feature>
<accession>P0DE48</accession>
<accession>P66281</accession>
<accession>Q9A0E9</accession>
<keyword id="KW-0687">Ribonucleoprotein</keyword>
<keyword id="KW-0689">Ribosomal protein</keyword>